<dbReference type="EMBL" id="L04129">
    <property type="protein sequence ID" value="AAA29432.1"/>
    <property type="molecule type" value="mRNA"/>
</dbReference>
<dbReference type="PIR" id="A46618">
    <property type="entry name" value="A46618"/>
</dbReference>
<dbReference type="SMR" id="Q04669"/>
<dbReference type="GO" id="GO:0005576">
    <property type="term" value="C:extracellular region"/>
    <property type="evidence" value="ECO:0007669"/>
    <property type="project" value="UniProtKB-SubCell"/>
</dbReference>
<dbReference type="GO" id="GO:0090729">
    <property type="term" value="F:toxin activity"/>
    <property type="evidence" value="ECO:0007669"/>
    <property type="project" value="UniProtKB-KW"/>
</dbReference>
<dbReference type="Gene3D" id="2.40.128.20">
    <property type="match status" value="1"/>
</dbReference>
<dbReference type="InterPro" id="IPR012674">
    <property type="entry name" value="Calycin"/>
</dbReference>
<keyword id="KW-0903">Direct protein sequencing</keyword>
<keyword id="KW-1015">Disulfide bond</keyword>
<keyword id="KW-1199">Hemostasis impairing toxin</keyword>
<keyword id="KW-1201">Platelet aggregation inhibiting toxin</keyword>
<keyword id="KW-0964">Secreted</keyword>
<keyword id="KW-0732">Signal</keyword>
<keyword id="KW-0800">Toxin</keyword>
<sequence length="171" mass="18824">MMLVLTTLIFSFSASIAYAQSGCSVSDPLDALKAFKDGAGTFLLQKSTDPQARDCLKGTPNGNRDGNTLPVTMTYKDDSKWVSLNWMFTLEGANIVATLEGKRKQRGELVYDVQSHDCHITKLSSGVYQQWQSNGSADDKDIKCCDEKFKELTSGIDYTKPQEKGCETSAK</sequence>
<feature type="signal peptide" evidence="2">
    <location>
        <begin position="1"/>
        <end position="15"/>
    </location>
</feature>
<feature type="chain" id="PRO_0000021732" description="Moubatin" evidence="12">
    <location>
        <begin position="16"/>
        <end position="171"/>
    </location>
</feature>
<feature type="disulfide bond" evidence="1">
    <location>
        <begin position="23"/>
        <end position="144"/>
    </location>
</feature>
<feature type="disulfide bond" evidence="1">
    <location>
        <begin position="55"/>
        <end position="166"/>
    </location>
</feature>
<feature type="disulfide bond" evidence="1">
    <location>
        <begin position="118"/>
        <end position="145"/>
    </location>
</feature>
<feature type="sequence conflict" description="In Ref. 1; AA sequence." evidence="9" ref="1">
    <original>D</original>
    <variation>DE</variation>
    <location>
        <position position="54"/>
    </location>
</feature>
<accession>Q04669</accession>
<proteinExistence type="evidence at protein level"/>
<comment type="function">
    <text evidence="3 4 5">Tick salivary platelet aggregation inhibitor that plays an important part in the anti-hemostatic strategy of ticks. Acts by scavenging thromboxane A2 (TXA2), a potent inducer of platelet aggregation and blood vessel constriction (PubMed:18694828, PubMed:8449906). As a consequence, is a specific inhibitor of collagen-induced platelet aggregation (PubMed:8449906, PubMed:8449907). In addition, it also acts as a potent inhibitor of TXA2-mediated vasoconstriction (PubMed:18694828). Has also been found to bind leukotriene B4 (LTB4) (which also derives from arachidonic acid, as TXA2) with affinities in the nanomolar range (PubMed:18694828). It does not interact with complement protein C5 (PubMed:18694828).</text>
</comment>
<comment type="subcellular location">
    <subcellularLocation>
        <location evidence="10">Secreted</location>
    </subcellularLocation>
</comment>
<comment type="tissue specificity">
    <text evidence="10">Expressed in salivary glands.</text>
</comment>
<comment type="PTM">
    <text evidence="11">The N-terminus is blocked.</text>
</comment>
<comment type="similarity">
    <text evidence="9">Belongs to the calycin superfamily. Lipocalin family.</text>
</comment>
<comment type="caution">
    <text evidence="12">There are 10 AA differences between the cDNA deduced sequence and the determined protein sequence. These differences are not indicated in the paper.</text>
</comment>
<protein>
    <recommendedName>
        <fullName evidence="7 8">Moubatin</fullName>
    </recommendedName>
    <alternativeName>
        <fullName evidence="6">Lipocalin</fullName>
    </alternativeName>
    <alternativeName>
        <fullName evidence="8">Platelet aggregation inhibitor</fullName>
        <shortName evidence="9">PAI</shortName>
    </alternativeName>
</protein>
<reference key="1">
    <citation type="journal article" date="1993" name="J. Biol. Chem.">
        <title>Cloning of the cDNA and expression of moubatin, an inhibitor of platelet aggregation.</title>
        <authorList>
            <person name="Keller P.M."/>
            <person name="Waxman L."/>
            <person name="Arnold B.A."/>
            <person name="Schultz L.D."/>
            <person name="Condra C."/>
            <person name="Connolly T.M."/>
        </authorList>
    </citation>
    <scope>NUCLEOTIDE SEQUENCE [MRNA]</scope>
    <scope>PARTIAL PROTEIN SEQUENCE</scope>
    <scope>FUNCTION</scope>
    <scope>RECOMBINANT EXPRESSION</scope>
</reference>
<reference key="2">
    <citation type="journal article" date="1993" name="J. Biol. Chem.">
        <title>Isolation of an inhibitor selective for collagen-stimulated platelet aggregation from the soft tick Ornithodoros moubata.</title>
        <authorList>
            <person name="Waxman L."/>
            <person name="Connolly T.M."/>
        </authorList>
    </citation>
    <scope>FUNCTION</scope>
</reference>
<reference key="3">
    <citation type="journal article" date="2008" name="Insect Biochem. Mol. Biol.">
        <title>Function, mechanism and evolution of the moubatin-clade of soft tick lipocalins.</title>
        <authorList>
            <person name="Mans B.J."/>
            <person name="Ribeiro J.M."/>
        </authorList>
    </citation>
    <scope>FUNCTION</scope>
    <scope>RECOMBINANT EXPRESSION</scope>
</reference>
<name>MOUB_ORNMO</name>
<organism>
    <name type="scientific">Ornithodoros moubata</name>
    <name type="common">Soft tick</name>
    <name type="synonym">Argasid tick</name>
    <dbReference type="NCBI Taxonomy" id="6938"/>
    <lineage>
        <taxon>Eukaryota</taxon>
        <taxon>Metazoa</taxon>
        <taxon>Ecdysozoa</taxon>
        <taxon>Arthropoda</taxon>
        <taxon>Chelicerata</taxon>
        <taxon>Arachnida</taxon>
        <taxon>Acari</taxon>
        <taxon>Parasitiformes</taxon>
        <taxon>Ixodida</taxon>
        <taxon>Ixodoidea</taxon>
        <taxon>Argasidae</taxon>
        <taxon>Ornithodorinae</taxon>
        <taxon>Ornithodoros</taxon>
    </lineage>
</organism>
<evidence type="ECO:0000250" key="1">
    <source>
        <dbReference type="UniProtKB" id="Q5YD59"/>
    </source>
</evidence>
<evidence type="ECO:0000255" key="2"/>
<evidence type="ECO:0000269" key="3">
    <source>
    </source>
</evidence>
<evidence type="ECO:0000269" key="4">
    <source>
    </source>
</evidence>
<evidence type="ECO:0000269" key="5">
    <source>
    </source>
</evidence>
<evidence type="ECO:0000303" key="6">
    <source>
    </source>
</evidence>
<evidence type="ECO:0000303" key="7">
    <source>
    </source>
</evidence>
<evidence type="ECO:0000303" key="8">
    <source>
    </source>
</evidence>
<evidence type="ECO:0000305" key="9"/>
<evidence type="ECO:0000305" key="10">
    <source>
    </source>
</evidence>
<evidence type="ECO:0000305" key="11">
    <source>
    </source>
</evidence>
<evidence type="ECO:0000305" key="12">
    <source>
    </source>
</evidence>